<keyword id="KW-1185">Reference proteome</keyword>
<keyword id="KW-0808">Transferase</keyword>
<keyword id="KW-0816">Tricarboxylic acid cycle</keyword>
<organism>
    <name type="scientific">Rhizobium meliloti (strain 1021)</name>
    <name type="common">Ensifer meliloti</name>
    <name type="synonym">Sinorhizobium meliloti</name>
    <dbReference type="NCBI Taxonomy" id="266834"/>
    <lineage>
        <taxon>Bacteria</taxon>
        <taxon>Pseudomonadati</taxon>
        <taxon>Pseudomonadota</taxon>
        <taxon>Alphaproteobacteria</taxon>
        <taxon>Hyphomicrobiales</taxon>
        <taxon>Rhizobiaceae</taxon>
        <taxon>Sinorhizobium/Ensifer group</taxon>
        <taxon>Sinorhizobium</taxon>
    </lineage>
</organism>
<protein>
    <recommendedName>
        <fullName>Citrate synthase</fullName>
        <ecNumber>2.3.3.16</ecNumber>
    </recommendedName>
</protein>
<comment type="catalytic activity">
    <reaction evidence="1">
        <text>oxaloacetate + acetyl-CoA + H2O = citrate + CoA + H(+)</text>
        <dbReference type="Rhea" id="RHEA:16845"/>
        <dbReference type="ChEBI" id="CHEBI:15377"/>
        <dbReference type="ChEBI" id="CHEBI:15378"/>
        <dbReference type="ChEBI" id="CHEBI:16452"/>
        <dbReference type="ChEBI" id="CHEBI:16947"/>
        <dbReference type="ChEBI" id="CHEBI:57287"/>
        <dbReference type="ChEBI" id="CHEBI:57288"/>
        <dbReference type="EC" id="2.3.3.16"/>
    </reaction>
</comment>
<comment type="pathway">
    <text>Carbohydrate metabolism; tricarboxylic acid cycle; isocitrate from oxaloacetate: step 1/2.</text>
</comment>
<comment type="similarity">
    <text evidence="2">Belongs to the citrate synthase family.</text>
</comment>
<evidence type="ECO:0000255" key="1">
    <source>
        <dbReference type="PROSITE-ProRule" id="PRU10117"/>
    </source>
</evidence>
<evidence type="ECO:0000305" key="2"/>
<accession>O33915</accession>
<feature type="chain" id="PRO_0000169953" description="Citrate synthase">
    <location>
        <begin position="1"/>
        <end position="429"/>
    </location>
</feature>
<feature type="active site" evidence="1">
    <location>
        <position position="306"/>
    </location>
</feature>
<feature type="active site" evidence="1">
    <location>
        <position position="364"/>
    </location>
</feature>
<feature type="sequence conflict" description="In Ref. 1; AAB82405." evidence="2" ref="1">
    <original>E</original>
    <variation>D</variation>
    <location>
        <position position="209"/>
    </location>
</feature>
<feature type="sequence conflict" description="In Ref. 1; AAB82405." evidence="2" ref="1">
    <original>D</original>
    <variation>N</variation>
    <location>
        <position position="229"/>
    </location>
</feature>
<feature type="sequence conflict" description="In Ref. 1; AAB82405." evidence="2" ref="1">
    <original>V</original>
    <variation>A</variation>
    <location>
        <position position="282"/>
    </location>
</feature>
<feature type="sequence conflict" description="In Ref. 1; AAB82405." evidence="2" ref="1">
    <original>T</original>
    <variation>A</variation>
    <location>
        <position position="290"/>
    </location>
</feature>
<feature type="sequence conflict" description="In Ref. 1; AAB82405." evidence="2" ref="1">
    <original>I</original>
    <variation>V</variation>
    <location>
        <position position="355"/>
    </location>
</feature>
<feature type="sequence conflict" description="In Ref. 1; AAB82405." evidence="2" ref="1">
    <original>S</original>
    <variation>T</variation>
    <location>
        <position position="427"/>
    </location>
</feature>
<gene>
    <name type="primary">gltA</name>
    <name type="ordered locus">R01509</name>
    <name type="ORF">SMc02087</name>
</gene>
<reference key="1">
    <citation type="submission" date="1996-10" db="EMBL/GenBank/DDBJ databases">
        <title>Isolation and characterization of a gene coding for citrate synthase from Rhizobium meliloti.</title>
        <authorList>
            <person name="Mortimer M.W."/>
            <person name="McDermott T.R."/>
            <person name="Kahn M.L."/>
        </authorList>
    </citation>
    <scope>NUCLEOTIDE SEQUENCE [GENOMIC DNA]</scope>
    <source>
        <strain>104A14</strain>
    </source>
</reference>
<reference key="2">
    <citation type="journal article" date="2001" name="Proc. Natl. Acad. Sci. U.S.A.">
        <title>Analysis of the chromosome sequence of the legume symbiont Sinorhizobium meliloti strain 1021.</title>
        <authorList>
            <person name="Capela D."/>
            <person name="Barloy-Hubler F."/>
            <person name="Gouzy J."/>
            <person name="Bothe G."/>
            <person name="Ampe F."/>
            <person name="Batut J."/>
            <person name="Boistard P."/>
            <person name="Becker A."/>
            <person name="Boutry M."/>
            <person name="Cadieu E."/>
            <person name="Dreano S."/>
            <person name="Gloux S."/>
            <person name="Godrie T."/>
            <person name="Goffeau A."/>
            <person name="Kahn D."/>
            <person name="Kiss E."/>
            <person name="Lelaure V."/>
            <person name="Masuy D."/>
            <person name="Pohl T."/>
            <person name="Portetelle D."/>
            <person name="Puehler A."/>
            <person name="Purnelle B."/>
            <person name="Ramsperger U."/>
            <person name="Renard C."/>
            <person name="Thebault P."/>
            <person name="Vandenbol M."/>
            <person name="Weidner S."/>
            <person name="Galibert F."/>
        </authorList>
    </citation>
    <scope>NUCLEOTIDE SEQUENCE [LARGE SCALE GENOMIC DNA]</scope>
    <source>
        <strain>1021</strain>
    </source>
</reference>
<reference key="3">
    <citation type="journal article" date="2001" name="Science">
        <title>The composite genome of the legume symbiont Sinorhizobium meliloti.</title>
        <authorList>
            <person name="Galibert F."/>
            <person name="Finan T.M."/>
            <person name="Long S.R."/>
            <person name="Puehler A."/>
            <person name="Abola P."/>
            <person name="Ampe F."/>
            <person name="Barloy-Hubler F."/>
            <person name="Barnett M.J."/>
            <person name="Becker A."/>
            <person name="Boistard P."/>
            <person name="Bothe G."/>
            <person name="Boutry M."/>
            <person name="Bowser L."/>
            <person name="Buhrmester J."/>
            <person name="Cadieu E."/>
            <person name="Capela D."/>
            <person name="Chain P."/>
            <person name="Cowie A."/>
            <person name="Davis R.W."/>
            <person name="Dreano S."/>
            <person name="Federspiel N.A."/>
            <person name="Fisher R.F."/>
            <person name="Gloux S."/>
            <person name="Godrie T."/>
            <person name="Goffeau A."/>
            <person name="Golding B."/>
            <person name="Gouzy J."/>
            <person name="Gurjal M."/>
            <person name="Hernandez-Lucas I."/>
            <person name="Hong A."/>
            <person name="Huizar L."/>
            <person name="Hyman R.W."/>
            <person name="Jones T."/>
            <person name="Kahn D."/>
            <person name="Kahn M.L."/>
            <person name="Kalman S."/>
            <person name="Keating D.H."/>
            <person name="Kiss E."/>
            <person name="Komp C."/>
            <person name="Lelaure V."/>
            <person name="Masuy D."/>
            <person name="Palm C."/>
            <person name="Peck M.C."/>
            <person name="Pohl T.M."/>
            <person name="Portetelle D."/>
            <person name="Purnelle B."/>
            <person name="Ramsperger U."/>
            <person name="Surzycki R."/>
            <person name="Thebault P."/>
            <person name="Vandenbol M."/>
            <person name="Vorhoelter F.J."/>
            <person name="Weidner S."/>
            <person name="Wells D.H."/>
            <person name="Wong K."/>
            <person name="Yeh K.-C."/>
            <person name="Batut J."/>
        </authorList>
    </citation>
    <scope>NUCLEOTIDE SEQUENCE [LARGE SCALE GENOMIC DNA]</scope>
    <source>
        <strain>1021</strain>
    </source>
</reference>
<dbReference type="EC" id="2.3.3.16"/>
<dbReference type="EMBL" id="U75365">
    <property type="protein sequence ID" value="AAB82405.1"/>
    <property type="molecule type" value="Genomic_DNA"/>
</dbReference>
<dbReference type="EMBL" id="AL591688">
    <property type="protein sequence ID" value="CAC46088.1"/>
    <property type="molecule type" value="Genomic_DNA"/>
</dbReference>
<dbReference type="RefSeq" id="NP_385615.1">
    <property type="nucleotide sequence ID" value="NC_003047.1"/>
</dbReference>
<dbReference type="RefSeq" id="WP_010969265.1">
    <property type="nucleotide sequence ID" value="NC_003047.1"/>
</dbReference>
<dbReference type="SMR" id="O33915"/>
<dbReference type="EnsemblBacteria" id="CAC46088">
    <property type="protein sequence ID" value="CAC46088"/>
    <property type="gene ID" value="SMc02087"/>
</dbReference>
<dbReference type="KEGG" id="sme:SMc02087"/>
<dbReference type="PATRIC" id="fig|266834.11.peg.2930"/>
<dbReference type="eggNOG" id="COG0372">
    <property type="taxonomic scope" value="Bacteria"/>
</dbReference>
<dbReference type="HOGENOM" id="CLU_025068_0_0_5"/>
<dbReference type="OrthoDB" id="9800864at2"/>
<dbReference type="UniPathway" id="UPA00223">
    <property type="reaction ID" value="UER00717"/>
</dbReference>
<dbReference type="Proteomes" id="UP000001976">
    <property type="component" value="Chromosome"/>
</dbReference>
<dbReference type="GO" id="GO:0005737">
    <property type="term" value="C:cytoplasm"/>
    <property type="evidence" value="ECO:0007669"/>
    <property type="project" value="InterPro"/>
</dbReference>
<dbReference type="GO" id="GO:0004108">
    <property type="term" value="F:citrate (Si)-synthase activity"/>
    <property type="evidence" value="ECO:0007669"/>
    <property type="project" value="InterPro"/>
</dbReference>
<dbReference type="GO" id="GO:0006099">
    <property type="term" value="P:tricarboxylic acid cycle"/>
    <property type="evidence" value="ECO:0007669"/>
    <property type="project" value="UniProtKB-UniPathway"/>
</dbReference>
<dbReference type="CDD" id="cd06114">
    <property type="entry name" value="EcCS_like"/>
    <property type="match status" value="1"/>
</dbReference>
<dbReference type="FunFam" id="1.10.230.10:FF:000002">
    <property type="entry name" value="Citrate synthase"/>
    <property type="match status" value="1"/>
</dbReference>
<dbReference type="Gene3D" id="2.20.28.60">
    <property type="match status" value="1"/>
</dbReference>
<dbReference type="Gene3D" id="1.10.580.10">
    <property type="entry name" value="Citrate Synthase, domain 1"/>
    <property type="match status" value="1"/>
</dbReference>
<dbReference type="Gene3D" id="1.10.230.10">
    <property type="entry name" value="Cytochrome P450-Terp, domain 2"/>
    <property type="match status" value="1"/>
</dbReference>
<dbReference type="InterPro" id="IPR016142">
    <property type="entry name" value="Citrate_synth-like_lrg_a-sub"/>
</dbReference>
<dbReference type="InterPro" id="IPR016143">
    <property type="entry name" value="Citrate_synth-like_sm_a-sub"/>
</dbReference>
<dbReference type="InterPro" id="IPR002020">
    <property type="entry name" value="Citrate_synthase"/>
</dbReference>
<dbReference type="InterPro" id="IPR019810">
    <property type="entry name" value="Citrate_synthase_AS"/>
</dbReference>
<dbReference type="InterPro" id="IPR024176">
    <property type="entry name" value="Citrate_synthase_bac-typ"/>
</dbReference>
<dbReference type="InterPro" id="IPR036969">
    <property type="entry name" value="Citrate_synthase_sf"/>
</dbReference>
<dbReference type="InterPro" id="IPR010953">
    <property type="entry name" value="Citrate_synthase_typ-I"/>
</dbReference>
<dbReference type="NCBIfam" id="TIGR01798">
    <property type="entry name" value="cit_synth_I"/>
    <property type="match status" value="1"/>
</dbReference>
<dbReference type="NCBIfam" id="NF004126">
    <property type="entry name" value="PRK05614.1"/>
    <property type="match status" value="1"/>
</dbReference>
<dbReference type="PANTHER" id="PTHR42871">
    <property type="entry name" value="CITRATE SYNTHASE"/>
    <property type="match status" value="1"/>
</dbReference>
<dbReference type="PANTHER" id="PTHR42871:SF1">
    <property type="entry name" value="CITRATE SYNTHASE"/>
    <property type="match status" value="1"/>
</dbReference>
<dbReference type="Pfam" id="PF00285">
    <property type="entry name" value="Citrate_synt"/>
    <property type="match status" value="1"/>
</dbReference>
<dbReference type="PIRSF" id="PIRSF001369">
    <property type="entry name" value="Citrate_synth"/>
    <property type="match status" value="1"/>
</dbReference>
<dbReference type="PRINTS" id="PR00143">
    <property type="entry name" value="CITRTSNTHASE"/>
</dbReference>
<dbReference type="SUPFAM" id="SSF48256">
    <property type="entry name" value="Citrate synthase"/>
    <property type="match status" value="1"/>
</dbReference>
<dbReference type="PROSITE" id="PS00480">
    <property type="entry name" value="CITRATE_SYNTHASE"/>
    <property type="match status" value="1"/>
</dbReference>
<sequence>MSEKSATVTFGGKSADLPVRSGSIGPDVVDIGSLYKQTTMFTYDPGFTSTASCESKITYIDGDEGVLLHRGFPIEQLAEHGDFLEVCYLLLYGELPTKAQKADFDYRVTHHTMVHEQMSRFFTGFRRDAHPMAVMCGCVGALSAFYHDSTDITDPHQRMVASLRMIAKMPTIAAMAYKYHIGQPFVYPKNDLDYASNFLRMCFAVPCEEYVVNPVLARAMDRIFILHADHEQNASTSTVRLAGSSGANPFACIAAGIACLWGPAHGGANEAALNMLAEIGTVDRIPEYITKAKDKNDPFRLMGFGHRVYKNYDPRAKIMQKTTHEVLAELGHKDDPLLEVAMELERIALTDEYFIEKKLYPNIDFYSGITLKALGFPTTMFTVLFALARTVGWIAQWNEMIEDPEQRIGRPRQLYVGAPLRDYVPISKR</sequence>
<proteinExistence type="inferred from homology"/>
<name>CISY_RHIME</name>